<reference evidence="4" key="1">
    <citation type="journal article" date="2002" name="Nature">
        <title>The genome sequence of Schizosaccharomyces pombe.</title>
        <authorList>
            <person name="Wood V."/>
            <person name="Gwilliam R."/>
            <person name="Rajandream M.A."/>
            <person name="Lyne M.H."/>
            <person name="Lyne R."/>
            <person name="Stewart A."/>
            <person name="Sgouros J.G."/>
            <person name="Peat N."/>
            <person name="Hayles J."/>
            <person name="Baker S.G."/>
            <person name="Basham D."/>
            <person name="Bowman S."/>
            <person name="Brooks K."/>
            <person name="Brown D."/>
            <person name="Brown S."/>
            <person name="Chillingworth T."/>
            <person name="Churcher C.M."/>
            <person name="Collins M."/>
            <person name="Connor R."/>
            <person name="Cronin A."/>
            <person name="Davis P."/>
            <person name="Feltwell T."/>
            <person name="Fraser A."/>
            <person name="Gentles S."/>
            <person name="Goble A."/>
            <person name="Hamlin N."/>
            <person name="Harris D.E."/>
            <person name="Hidalgo J."/>
            <person name="Hodgson G."/>
            <person name="Holroyd S."/>
            <person name="Hornsby T."/>
            <person name="Howarth S."/>
            <person name="Huckle E.J."/>
            <person name="Hunt S."/>
            <person name="Jagels K."/>
            <person name="James K.D."/>
            <person name="Jones L."/>
            <person name="Jones M."/>
            <person name="Leather S."/>
            <person name="McDonald S."/>
            <person name="McLean J."/>
            <person name="Mooney P."/>
            <person name="Moule S."/>
            <person name="Mungall K.L."/>
            <person name="Murphy L.D."/>
            <person name="Niblett D."/>
            <person name="Odell C."/>
            <person name="Oliver K."/>
            <person name="O'Neil S."/>
            <person name="Pearson D."/>
            <person name="Quail M.A."/>
            <person name="Rabbinowitsch E."/>
            <person name="Rutherford K.M."/>
            <person name="Rutter S."/>
            <person name="Saunders D."/>
            <person name="Seeger K."/>
            <person name="Sharp S."/>
            <person name="Skelton J."/>
            <person name="Simmonds M.N."/>
            <person name="Squares R."/>
            <person name="Squares S."/>
            <person name="Stevens K."/>
            <person name="Taylor K."/>
            <person name="Taylor R.G."/>
            <person name="Tivey A."/>
            <person name="Walsh S.V."/>
            <person name="Warren T."/>
            <person name="Whitehead S."/>
            <person name="Woodward J.R."/>
            <person name="Volckaert G."/>
            <person name="Aert R."/>
            <person name="Robben J."/>
            <person name="Grymonprez B."/>
            <person name="Weltjens I."/>
            <person name="Vanstreels E."/>
            <person name="Rieger M."/>
            <person name="Schaefer M."/>
            <person name="Mueller-Auer S."/>
            <person name="Gabel C."/>
            <person name="Fuchs M."/>
            <person name="Duesterhoeft A."/>
            <person name="Fritzc C."/>
            <person name="Holzer E."/>
            <person name="Moestl D."/>
            <person name="Hilbert H."/>
            <person name="Borzym K."/>
            <person name="Langer I."/>
            <person name="Beck A."/>
            <person name="Lehrach H."/>
            <person name="Reinhardt R."/>
            <person name="Pohl T.M."/>
            <person name="Eger P."/>
            <person name="Zimmermann W."/>
            <person name="Wedler H."/>
            <person name="Wambutt R."/>
            <person name="Purnelle B."/>
            <person name="Goffeau A."/>
            <person name="Cadieu E."/>
            <person name="Dreano S."/>
            <person name="Gloux S."/>
            <person name="Lelaure V."/>
            <person name="Mottier S."/>
            <person name="Galibert F."/>
            <person name="Aves S.J."/>
            <person name="Xiang Z."/>
            <person name="Hunt C."/>
            <person name="Moore K."/>
            <person name="Hurst S.M."/>
            <person name="Lucas M."/>
            <person name="Rochet M."/>
            <person name="Gaillardin C."/>
            <person name="Tallada V.A."/>
            <person name="Garzon A."/>
            <person name="Thode G."/>
            <person name="Daga R.R."/>
            <person name="Cruzado L."/>
            <person name="Jimenez J."/>
            <person name="Sanchez M."/>
            <person name="del Rey F."/>
            <person name="Benito J."/>
            <person name="Dominguez A."/>
            <person name="Revuelta J.L."/>
            <person name="Moreno S."/>
            <person name="Armstrong J."/>
            <person name="Forsburg S.L."/>
            <person name="Cerutti L."/>
            <person name="Lowe T."/>
            <person name="McCombie W.R."/>
            <person name="Paulsen I."/>
            <person name="Potashkin J."/>
            <person name="Shpakovski G.V."/>
            <person name="Ussery D."/>
            <person name="Barrell B.G."/>
            <person name="Nurse P."/>
        </authorList>
    </citation>
    <scope>NUCLEOTIDE SEQUENCE [LARGE SCALE GENOMIC DNA]</scope>
    <source>
        <strain>972 / ATCC 24843</strain>
    </source>
</reference>
<reference evidence="3" key="2">
    <citation type="journal article" date="2008" name="J. Proteome Res.">
        <title>Phosphoproteome analysis of fission yeast.</title>
        <authorList>
            <person name="Wilson-Grady J.T."/>
            <person name="Villen J."/>
            <person name="Gygi S.P."/>
        </authorList>
    </citation>
    <scope>PHOSPHORYLATION [LARGE SCALE ANALYSIS] AT SER-55</scope>
    <scope>IDENTIFICATION BY MASS SPECTROMETRY</scope>
</reference>
<dbReference type="EMBL" id="CU329672">
    <property type="protein sequence ID" value="CAA21196.1"/>
    <property type="molecule type" value="Genomic_DNA"/>
</dbReference>
<dbReference type="PIR" id="T41427">
    <property type="entry name" value="T41427"/>
</dbReference>
<dbReference type="RefSeq" id="NP_588443.1">
    <property type="nucleotide sequence ID" value="NM_001023434.2"/>
</dbReference>
<dbReference type="SMR" id="O74899"/>
<dbReference type="FunCoup" id="O74899">
    <property type="interactions" value="5"/>
</dbReference>
<dbReference type="iPTMnet" id="O74899"/>
<dbReference type="PaxDb" id="4896-SPCC576.17c.1"/>
<dbReference type="EnsemblFungi" id="SPCC576.17c.1">
    <property type="protein sequence ID" value="SPCC576.17c.1:pep"/>
    <property type="gene ID" value="SPCC576.17c"/>
</dbReference>
<dbReference type="KEGG" id="spo:2539554"/>
<dbReference type="PomBase" id="SPCC576.17c"/>
<dbReference type="VEuPathDB" id="FungiDB:SPCC576.17c"/>
<dbReference type="eggNOG" id="KOG0255">
    <property type="taxonomic scope" value="Eukaryota"/>
</dbReference>
<dbReference type="HOGENOM" id="CLU_008455_11_5_1"/>
<dbReference type="InParanoid" id="O74899"/>
<dbReference type="OMA" id="ADYHIWQ"/>
<dbReference type="PhylomeDB" id="O74899"/>
<dbReference type="PRO" id="PR:O74899"/>
<dbReference type="Proteomes" id="UP000002485">
    <property type="component" value="Chromosome III"/>
</dbReference>
<dbReference type="GO" id="GO:0005737">
    <property type="term" value="C:cytoplasm"/>
    <property type="evidence" value="ECO:0007005"/>
    <property type="project" value="PomBase"/>
</dbReference>
<dbReference type="GO" id="GO:0005886">
    <property type="term" value="C:plasma membrane"/>
    <property type="evidence" value="ECO:0000318"/>
    <property type="project" value="GO_Central"/>
</dbReference>
<dbReference type="GO" id="GO:0031925">
    <property type="term" value="F:pyridoxal transmembrane transporter activity"/>
    <property type="evidence" value="ECO:0000250"/>
    <property type="project" value="PomBase"/>
</dbReference>
<dbReference type="GO" id="GO:0031927">
    <property type="term" value="F:pyridoxamine transmembrane transporter activity"/>
    <property type="evidence" value="ECO:0000250"/>
    <property type="project" value="PomBase"/>
</dbReference>
<dbReference type="GO" id="GO:0031928">
    <property type="term" value="F:pyridoxine transmembrane transporter activity"/>
    <property type="evidence" value="ECO:0000250"/>
    <property type="project" value="PomBase"/>
</dbReference>
<dbReference type="GO" id="GO:0022857">
    <property type="term" value="F:transmembrane transporter activity"/>
    <property type="evidence" value="ECO:0000318"/>
    <property type="project" value="GO_Central"/>
</dbReference>
<dbReference type="GO" id="GO:0140115">
    <property type="term" value="P:export across plasma membrane"/>
    <property type="evidence" value="ECO:0007669"/>
    <property type="project" value="UniProtKB-ARBA"/>
</dbReference>
<dbReference type="GO" id="GO:1903090">
    <property type="term" value="P:pyridoxal transmembrane transport"/>
    <property type="evidence" value="ECO:0000250"/>
    <property type="project" value="PomBase"/>
</dbReference>
<dbReference type="GO" id="GO:1903091">
    <property type="term" value="P:pyridoxamine transmembrane transport"/>
    <property type="evidence" value="ECO:0000250"/>
    <property type="project" value="PomBase"/>
</dbReference>
<dbReference type="GO" id="GO:1903092">
    <property type="term" value="P:pyridoxine transmembrane transport"/>
    <property type="evidence" value="ECO:0000250"/>
    <property type="project" value="PomBase"/>
</dbReference>
<dbReference type="GO" id="GO:0055085">
    <property type="term" value="P:transmembrane transport"/>
    <property type="evidence" value="ECO:0000318"/>
    <property type="project" value="GO_Central"/>
</dbReference>
<dbReference type="GO" id="GO:0042908">
    <property type="term" value="P:xenobiotic transport"/>
    <property type="evidence" value="ECO:0007669"/>
    <property type="project" value="UniProtKB-ARBA"/>
</dbReference>
<dbReference type="CDD" id="cd17323">
    <property type="entry name" value="MFS_Tpo1_MDR_like"/>
    <property type="match status" value="1"/>
</dbReference>
<dbReference type="FunFam" id="1.20.1250.20:FF:000596">
    <property type="entry name" value="Vitamin b6 transporter bsu1"/>
    <property type="match status" value="1"/>
</dbReference>
<dbReference type="Gene3D" id="1.20.1250.20">
    <property type="entry name" value="MFS general substrate transporter like domains"/>
    <property type="match status" value="1"/>
</dbReference>
<dbReference type="InterPro" id="IPR011701">
    <property type="entry name" value="MFS"/>
</dbReference>
<dbReference type="InterPro" id="IPR020846">
    <property type="entry name" value="MFS_dom"/>
</dbReference>
<dbReference type="InterPro" id="IPR036259">
    <property type="entry name" value="MFS_trans_sf"/>
</dbReference>
<dbReference type="InterPro" id="IPR005829">
    <property type="entry name" value="Sugar_transporter_CS"/>
</dbReference>
<dbReference type="PANTHER" id="PTHR23502:SF183">
    <property type="match status" value="1"/>
</dbReference>
<dbReference type="PANTHER" id="PTHR23502">
    <property type="entry name" value="MAJOR FACILITATOR SUPERFAMILY"/>
    <property type="match status" value="1"/>
</dbReference>
<dbReference type="Pfam" id="PF07690">
    <property type="entry name" value="MFS_1"/>
    <property type="match status" value="1"/>
</dbReference>
<dbReference type="SUPFAM" id="SSF103473">
    <property type="entry name" value="MFS general substrate transporter"/>
    <property type="match status" value="1"/>
</dbReference>
<dbReference type="PROSITE" id="PS50850">
    <property type="entry name" value="MFS"/>
    <property type="match status" value="1"/>
</dbReference>
<dbReference type="PROSITE" id="PS00216">
    <property type="entry name" value="SUGAR_TRANSPORT_1"/>
    <property type="match status" value="1"/>
</dbReference>
<keyword id="KW-0472">Membrane</keyword>
<keyword id="KW-0597">Phosphoprotein</keyword>
<keyword id="KW-1185">Reference proteome</keyword>
<keyword id="KW-0812">Transmembrane</keyword>
<keyword id="KW-1133">Transmembrane helix</keyword>
<keyword id="KW-0813">Transport</keyword>
<sequence length="525" mass="59322">MNDTNDVMHVHSESISPKKNDLDIELGESVVEPHLSNNSIAKLDTYELEENEDISDYAYKLAGISNEHPAHPQNWGWWKKAYIVLLSTSLQMYVFWTPNFYPGVQDSVMELWHLSSQVSLLGQSMFVLGVALGPLFLGPLSDLLGRKLVYIGSLIIYVCFCISCALARNYAQLVISMLIMGVVGSTALGNVAGAVADVLGDEDSNWGMYMFIFMCSVASVGSPMGTGVAENPKLTWRWLYWIDVIVGGFFIILFVFTPETLPAIVIQRYEQKRQGLPVSWFPQFSLKKLAKDTYFVFFMAIKIFFSEPIVSSLGIYNGFVNGLLYFFLQAIWPVYFSIYKMSDMAASCTYMAAMPACVILLWFEPLQCWLYKRDKRKHQNRLRPEARFIMTLFYVWGFPIGIFMFAFCSKVHIHYIVSLIGLTIFNIADYHIWQAMLLYVTDAYPNVSASAVAAFELPSNLGAVGFIHLSALMFSRMNVHWATAVVGFASLPLIALIYALYFYGDRIRARSKLASQRVPINTAAH</sequence>
<proteinExistence type="evidence at protein level"/>
<gene>
    <name type="ORF">SPCC576.17c</name>
</gene>
<evidence type="ECO:0000255" key="1"/>
<evidence type="ECO:0000269" key="2">
    <source>
    </source>
</evidence>
<evidence type="ECO:0000305" key="3"/>
<evidence type="ECO:0000312" key="4">
    <source>
        <dbReference type="EMBL" id="CAA21196.1"/>
    </source>
</evidence>
<accession>O74899</accession>
<comment type="subcellular location">
    <subcellularLocation>
        <location evidence="1">Membrane</location>
        <topology evidence="1">Multi-pass membrane protein</topology>
    </subcellularLocation>
</comment>
<comment type="similarity">
    <text evidence="1">Belongs to the major facilitator superfamily. CAR1 family.</text>
</comment>
<protein>
    <recommendedName>
        <fullName>Uncharacterized transporter C576.17c</fullName>
    </recommendedName>
</protein>
<name>YQEH_SCHPO</name>
<organism>
    <name type="scientific">Schizosaccharomyces pombe (strain 972 / ATCC 24843)</name>
    <name type="common">Fission yeast</name>
    <dbReference type="NCBI Taxonomy" id="284812"/>
    <lineage>
        <taxon>Eukaryota</taxon>
        <taxon>Fungi</taxon>
        <taxon>Dikarya</taxon>
        <taxon>Ascomycota</taxon>
        <taxon>Taphrinomycotina</taxon>
        <taxon>Schizosaccharomycetes</taxon>
        <taxon>Schizosaccharomycetales</taxon>
        <taxon>Schizosaccharomycetaceae</taxon>
        <taxon>Schizosaccharomyces</taxon>
    </lineage>
</organism>
<feature type="chain" id="PRO_0000372795" description="Uncharacterized transporter C576.17c">
    <location>
        <begin position="1"/>
        <end position="525"/>
    </location>
</feature>
<feature type="transmembrane region" description="Helical" evidence="1">
    <location>
        <begin position="81"/>
        <end position="101"/>
    </location>
</feature>
<feature type="transmembrane region" description="Helical" evidence="1">
    <location>
        <begin position="120"/>
        <end position="140"/>
    </location>
</feature>
<feature type="transmembrane region" description="Helical" evidence="1">
    <location>
        <begin position="147"/>
        <end position="167"/>
    </location>
</feature>
<feature type="transmembrane region" description="Helical" evidence="1">
    <location>
        <begin position="173"/>
        <end position="193"/>
    </location>
</feature>
<feature type="transmembrane region" description="Helical" evidence="1">
    <location>
        <begin position="208"/>
        <end position="228"/>
    </location>
</feature>
<feature type="transmembrane region" description="Helical" evidence="1">
    <location>
        <begin position="238"/>
        <end position="258"/>
    </location>
</feature>
<feature type="transmembrane region" description="Helical" evidence="1">
    <location>
        <begin position="295"/>
        <end position="315"/>
    </location>
</feature>
<feature type="transmembrane region" description="Helical" evidence="1">
    <location>
        <begin position="318"/>
        <end position="338"/>
    </location>
</feature>
<feature type="transmembrane region" description="Helical" evidence="1">
    <location>
        <begin position="350"/>
        <end position="370"/>
    </location>
</feature>
<feature type="transmembrane region" description="Helical" evidence="1">
    <location>
        <begin position="388"/>
        <end position="408"/>
    </location>
</feature>
<feature type="transmembrane region" description="Helical" evidence="1">
    <location>
        <begin position="413"/>
        <end position="433"/>
    </location>
</feature>
<feature type="transmembrane region" description="Helical" evidence="1">
    <location>
        <begin position="454"/>
        <end position="474"/>
    </location>
</feature>
<feature type="transmembrane region" description="Helical" evidence="1">
    <location>
        <begin position="484"/>
        <end position="504"/>
    </location>
</feature>
<feature type="modified residue" description="Phosphoserine" evidence="2">
    <location>
        <position position="55"/>
    </location>
</feature>